<accession>Q9JKZ2</accession>
<accession>B2RU60</accession>
<evidence type="ECO:0000250" key="1"/>
<evidence type="ECO:0000250" key="2">
    <source>
        <dbReference type="UniProtKB" id="P31637"/>
    </source>
</evidence>
<evidence type="ECO:0000250" key="3">
    <source>
        <dbReference type="UniProtKB" id="P53794"/>
    </source>
</evidence>
<evidence type="ECO:0000255" key="4"/>
<evidence type="ECO:0000269" key="5">
    <source>
    </source>
</evidence>
<evidence type="ECO:0000269" key="6">
    <source>
    </source>
</evidence>
<evidence type="ECO:0000269" key="7">
    <source>
    </source>
</evidence>
<evidence type="ECO:0000305" key="8"/>
<keyword id="KW-1003">Cell membrane</keyword>
<keyword id="KW-0325">Glycoprotein</keyword>
<keyword id="KW-0406">Ion transport</keyword>
<keyword id="KW-0472">Membrane</keyword>
<keyword id="KW-0597">Phosphoprotein</keyword>
<keyword id="KW-1185">Reference proteome</keyword>
<keyword id="KW-0915">Sodium</keyword>
<keyword id="KW-0739">Sodium transport</keyword>
<keyword id="KW-0769">Symport</keyword>
<keyword id="KW-0812">Transmembrane</keyword>
<keyword id="KW-1133">Transmembrane helix</keyword>
<keyword id="KW-0813">Transport</keyword>
<organism>
    <name type="scientific">Mus musculus</name>
    <name type="common">Mouse</name>
    <dbReference type="NCBI Taxonomy" id="10090"/>
    <lineage>
        <taxon>Eukaryota</taxon>
        <taxon>Metazoa</taxon>
        <taxon>Chordata</taxon>
        <taxon>Craniata</taxon>
        <taxon>Vertebrata</taxon>
        <taxon>Euteleostomi</taxon>
        <taxon>Mammalia</taxon>
        <taxon>Eutheria</taxon>
        <taxon>Euarchontoglires</taxon>
        <taxon>Glires</taxon>
        <taxon>Rodentia</taxon>
        <taxon>Myomorpha</taxon>
        <taxon>Muroidea</taxon>
        <taxon>Muridae</taxon>
        <taxon>Murinae</taxon>
        <taxon>Mus</taxon>
        <taxon>Mus</taxon>
    </lineage>
</organism>
<proteinExistence type="evidence at protein level"/>
<dbReference type="EMBL" id="AF220915">
    <property type="protein sequence ID" value="AAF43668.1"/>
    <property type="molecule type" value="Genomic_DNA"/>
</dbReference>
<dbReference type="EMBL" id="CH466602">
    <property type="protein sequence ID" value="EDL03793.1"/>
    <property type="molecule type" value="Genomic_DNA"/>
</dbReference>
<dbReference type="EMBL" id="BC140982">
    <property type="protein sequence ID" value="AAI40983.1"/>
    <property type="molecule type" value="mRNA"/>
</dbReference>
<dbReference type="EMBL" id="BC140983">
    <property type="protein sequence ID" value="AAI40984.1"/>
    <property type="molecule type" value="mRNA"/>
</dbReference>
<dbReference type="CCDS" id="CCDS37403.1"/>
<dbReference type="RefSeq" id="NP_059087.2">
    <property type="nucleotide sequence ID" value="NM_017391.3"/>
</dbReference>
<dbReference type="SMR" id="Q9JKZ2"/>
<dbReference type="BioGRID" id="207509">
    <property type="interactions" value="1"/>
</dbReference>
<dbReference type="FunCoup" id="Q9JKZ2">
    <property type="interactions" value="124"/>
</dbReference>
<dbReference type="STRING" id="10090.ENSMUSP00000109608"/>
<dbReference type="GlyCosmos" id="Q9JKZ2">
    <property type="glycosylation" value="1 site, No reported glycans"/>
</dbReference>
<dbReference type="GlyGen" id="Q9JKZ2">
    <property type="glycosylation" value="1 site, 1 N-linked glycan (1 site)"/>
</dbReference>
<dbReference type="iPTMnet" id="Q9JKZ2"/>
<dbReference type="PhosphoSitePlus" id="Q9JKZ2"/>
<dbReference type="SwissPalm" id="Q9JKZ2"/>
<dbReference type="PaxDb" id="10090-ENSMUSP00000109608"/>
<dbReference type="PeptideAtlas" id="Q9JKZ2"/>
<dbReference type="ProteomicsDB" id="256604"/>
<dbReference type="Pumba" id="Q9JKZ2"/>
<dbReference type="Antibodypedia" id="8029">
    <property type="antibodies" value="203 antibodies from 27 providers"/>
</dbReference>
<dbReference type="DNASU" id="53881"/>
<dbReference type="Ensembl" id="ENSMUST00000113975.3">
    <property type="protein sequence ID" value="ENSMUSP00000109608.3"/>
    <property type="gene ID" value="ENSMUSG00000089774.3"/>
</dbReference>
<dbReference type="GeneID" id="53881"/>
<dbReference type="KEGG" id="mmu:53881"/>
<dbReference type="UCSC" id="uc007zyt.2">
    <property type="organism name" value="mouse"/>
</dbReference>
<dbReference type="AGR" id="MGI:1858226"/>
<dbReference type="CTD" id="6526"/>
<dbReference type="MGI" id="MGI:1858226">
    <property type="gene designation" value="Slc5a3"/>
</dbReference>
<dbReference type="VEuPathDB" id="HostDB:ENSMUSG00000089774"/>
<dbReference type="eggNOG" id="KOG2349">
    <property type="taxonomic scope" value="Eukaryota"/>
</dbReference>
<dbReference type="GeneTree" id="ENSGT00940000161679"/>
<dbReference type="HOGENOM" id="CLU_018808_9_2_1"/>
<dbReference type="InParanoid" id="Q9JKZ2"/>
<dbReference type="OMA" id="VGIFMFV"/>
<dbReference type="OrthoDB" id="6132759at2759"/>
<dbReference type="PhylomeDB" id="Q9JKZ2"/>
<dbReference type="TreeFam" id="TF352855"/>
<dbReference type="Reactome" id="R-MMU-429593">
    <property type="pathway name" value="Inositol transporters"/>
</dbReference>
<dbReference type="BioGRID-ORCS" id="53881">
    <property type="hits" value="2 hits in 75 CRISPR screens"/>
</dbReference>
<dbReference type="PRO" id="PR:Q9JKZ2"/>
<dbReference type="Proteomes" id="UP000000589">
    <property type="component" value="Chromosome 16"/>
</dbReference>
<dbReference type="RNAct" id="Q9JKZ2">
    <property type="molecule type" value="protein"/>
</dbReference>
<dbReference type="Bgee" id="ENSMUSG00000089774">
    <property type="expression patterns" value="Expressed in vestibular membrane of cochlear duct and 248 other cell types or tissues"/>
</dbReference>
<dbReference type="GO" id="GO:0016324">
    <property type="term" value="C:apical plasma membrane"/>
    <property type="evidence" value="ECO:0000314"/>
    <property type="project" value="UniProtKB"/>
</dbReference>
<dbReference type="GO" id="GO:0016323">
    <property type="term" value="C:basolateral plasma membrane"/>
    <property type="evidence" value="ECO:0000314"/>
    <property type="project" value="UniProtKB"/>
</dbReference>
<dbReference type="GO" id="GO:0008076">
    <property type="term" value="C:voltage-gated potassium channel complex"/>
    <property type="evidence" value="ECO:0000314"/>
    <property type="project" value="MGI"/>
</dbReference>
<dbReference type="GO" id="GO:0005412">
    <property type="term" value="F:D-glucose:sodium symporter activity"/>
    <property type="evidence" value="ECO:0007669"/>
    <property type="project" value="InterPro"/>
</dbReference>
<dbReference type="GO" id="GO:0006020">
    <property type="term" value="P:inositol metabolic process"/>
    <property type="evidence" value="ECO:0000315"/>
    <property type="project" value="MGI"/>
</dbReference>
<dbReference type="GO" id="GO:0015798">
    <property type="term" value="P:myo-inositol transport"/>
    <property type="evidence" value="ECO:0000315"/>
    <property type="project" value="MGI"/>
</dbReference>
<dbReference type="GO" id="GO:0007422">
    <property type="term" value="P:peripheral nervous system development"/>
    <property type="evidence" value="ECO:0000315"/>
    <property type="project" value="MGI"/>
</dbReference>
<dbReference type="GO" id="GO:1905477">
    <property type="term" value="P:positive regulation of protein localization to membrane"/>
    <property type="evidence" value="ECO:0000315"/>
    <property type="project" value="ARUK-UCL"/>
</dbReference>
<dbReference type="GO" id="GO:1903428">
    <property type="term" value="P:positive regulation of reactive oxygen species biosynthetic process"/>
    <property type="evidence" value="ECO:0000315"/>
    <property type="project" value="ARUK-UCL"/>
</dbReference>
<dbReference type="GO" id="GO:0043576">
    <property type="term" value="P:regulation of respiratory gaseous exchange"/>
    <property type="evidence" value="ECO:0000315"/>
    <property type="project" value="MGI"/>
</dbReference>
<dbReference type="CDD" id="cd11491">
    <property type="entry name" value="SLC5sbd_SMIT"/>
    <property type="match status" value="1"/>
</dbReference>
<dbReference type="FunFam" id="1.20.1730.10:FF:000013">
    <property type="entry name" value="sodium/myo-inositol cotransporter isoform X1"/>
    <property type="match status" value="1"/>
</dbReference>
<dbReference type="Gene3D" id="1.20.1730.10">
    <property type="entry name" value="Sodium/glucose cotransporter"/>
    <property type="match status" value="1"/>
</dbReference>
<dbReference type="InterPro" id="IPR038377">
    <property type="entry name" value="Na/Glc_symporter_sf"/>
</dbReference>
<dbReference type="InterPro" id="IPR001734">
    <property type="entry name" value="Na/solute_symporter"/>
</dbReference>
<dbReference type="InterPro" id="IPR018212">
    <property type="entry name" value="Na/solute_symporter_CS"/>
</dbReference>
<dbReference type="InterPro" id="IPR042731">
    <property type="entry name" value="SMIT"/>
</dbReference>
<dbReference type="NCBIfam" id="TIGR00813">
    <property type="entry name" value="sss"/>
    <property type="match status" value="1"/>
</dbReference>
<dbReference type="PANTHER" id="PTHR11819:SF150">
    <property type="entry name" value="SODIUM_MYO-INOSITOL COTRANSPORTER"/>
    <property type="match status" value="1"/>
</dbReference>
<dbReference type="PANTHER" id="PTHR11819">
    <property type="entry name" value="SOLUTE CARRIER FAMILY 5"/>
    <property type="match status" value="1"/>
</dbReference>
<dbReference type="Pfam" id="PF00474">
    <property type="entry name" value="SSF"/>
    <property type="match status" value="1"/>
</dbReference>
<dbReference type="PROSITE" id="PS00456">
    <property type="entry name" value="NA_SOLUT_SYMP_1"/>
    <property type="match status" value="1"/>
</dbReference>
<dbReference type="PROSITE" id="PS00457">
    <property type="entry name" value="NA_SOLUT_SYMP_2"/>
    <property type="match status" value="1"/>
</dbReference>
<dbReference type="PROSITE" id="PS50283">
    <property type="entry name" value="NA_SOLUT_SYMP_3"/>
    <property type="match status" value="1"/>
</dbReference>
<feature type="chain" id="PRO_0000105382" description="Sodium/myo-inositol cotransporter">
    <location>
        <begin position="1"/>
        <end position="718"/>
    </location>
</feature>
<feature type="topological domain" description="Extracellular" evidence="4">
    <location>
        <begin position="1"/>
        <end position="9"/>
    </location>
</feature>
<feature type="transmembrane region" description="Helical" evidence="4">
    <location>
        <begin position="10"/>
        <end position="29"/>
    </location>
</feature>
<feature type="topological domain" description="Cytoplasmic" evidence="4">
    <location>
        <begin position="30"/>
        <end position="38"/>
    </location>
</feature>
<feature type="transmembrane region" description="Helical" evidence="4">
    <location>
        <begin position="39"/>
        <end position="57"/>
    </location>
</feature>
<feature type="topological domain" description="Extracellular" evidence="4">
    <location>
        <begin position="58"/>
        <end position="86"/>
    </location>
</feature>
<feature type="transmembrane region" description="Helical" evidence="4">
    <location>
        <begin position="87"/>
        <end position="110"/>
    </location>
</feature>
<feature type="topological domain" description="Cytoplasmic" evidence="4">
    <location>
        <begin position="111"/>
        <end position="123"/>
    </location>
</feature>
<feature type="transmembrane region" description="Helical" evidence="4">
    <location>
        <begin position="124"/>
        <end position="144"/>
    </location>
</feature>
<feature type="topological domain" description="Extracellular" evidence="4">
    <location>
        <begin position="145"/>
        <end position="157"/>
    </location>
</feature>
<feature type="transmembrane region" description="Helical" evidence="4">
    <location>
        <begin position="158"/>
        <end position="183"/>
    </location>
</feature>
<feature type="topological domain" description="Cytoplasmic" evidence="4">
    <location>
        <begin position="184"/>
        <end position="186"/>
    </location>
</feature>
<feature type="transmembrane region" description="Helical" evidence="4">
    <location>
        <begin position="187"/>
        <end position="205"/>
    </location>
</feature>
<feature type="topological domain" description="Extracellular" evidence="4">
    <location>
        <begin position="206"/>
        <end position="303"/>
    </location>
</feature>
<feature type="transmembrane region" description="Helical" evidence="4">
    <location>
        <begin position="304"/>
        <end position="324"/>
    </location>
</feature>
<feature type="topological domain" description="Cytoplasmic" evidence="4">
    <location>
        <begin position="325"/>
        <end position="353"/>
    </location>
</feature>
<feature type="transmembrane region" description="Helical" evidence="4">
    <location>
        <begin position="354"/>
        <end position="376"/>
    </location>
</feature>
<feature type="topological domain" description="Extracellular" evidence="4">
    <location>
        <begin position="377"/>
        <end position="406"/>
    </location>
</feature>
<feature type="transmembrane region" description="Helical" evidence="4">
    <location>
        <begin position="407"/>
        <end position="430"/>
    </location>
</feature>
<feature type="topological domain" description="Cytoplasmic" evidence="4">
    <location>
        <begin position="431"/>
        <end position="443"/>
    </location>
</feature>
<feature type="transmembrane region" description="Helical" evidence="4">
    <location>
        <begin position="444"/>
        <end position="462"/>
    </location>
</feature>
<feature type="topological domain" description="Extracellular" evidence="4">
    <location>
        <begin position="463"/>
        <end position="510"/>
    </location>
</feature>
<feature type="transmembrane region" description="Helical" evidence="4">
    <location>
        <begin position="511"/>
        <end position="532"/>
    </location>
</feature>
<feature type="topological domain" description="Cytoplasmic" evidence="4">
    <location>
        <begin position="533"/>
        <end position="695"/>
    </location>
</feature>
<feature type="transmembrane region" description="Helical" evidence="4">
    <location>
        <begin position="696"/>
        <end position="716"/>
    </location>
</feature>
<feature type="topological domain" description="Extracellular" evidence="4">
    <location>
        <begin position="717"/>
        <end position="718"/>
    </location>
</feature>
<feature type="site" description="Implicated in sodium coupling" evidence="1">
    <location>
        <position position="24"/>
    </location>
</feature>
<feature type="site" description="Implicated in sodium coupling" evidence="1">
    <location>
        <position position="285"/>
    </location>
</feature>
<feature type="modified residue" description="Phosphoserine" evidence="3">
    <location>
        <position position="594"/>
    </location>
</feature>
<feature type="modified residue" description="Phosphoserine" evidence="3">
    <location>
        <position position="632"/>
    </location>
</feature>
<feature type="glycosylation site" description="N-linked (GlcNAc...) asparagine" evidence="4">
    <location>
        <position position="232"/>
    </location>
</feature>
<feature type="sequence conflict" description="In Ref. 1; AAF43668." evidence="8" ref="1">
    <original>R</original>
    <variation>Q</variation>
    <location>
        <position position="653"/>
    </location>
</feature>
<sequence length="718" mass="79583">MRAVLEAADIAVVALYFILVMCIGFFAMWKSNRSTVSGYFLAGRSMTWVAIGASLFVSNIGSEHFIGLAGSGAASGFAVGAWEFNALLLLQLLGWVFIPIYIRSGVYTMPEYLSKRFGGHRIQVYFAALSLLLYIFTKLSVDLYSGALFIQESLGWNLYVSVILLIGMTALLTVTGGLVAVIYTDTLQALLMIIGALTLMVISMVKIGGFEEVKRRYMLASPDVASILLKYNLSNTNACMVHPKANALKMLRDPTDEDVPWPGFILGQTPASVWYWCADQVIVQRVLAAKNIAHAKGSTLMAGFLKLLPMFIIVVPGMISRIVFADEIACINPEHCMQVCGSRAGCSNIAYPRLVMTLVPVGLRGLMMAVMIAALMSDLDSIFNSASTIFTLDVYKLIRKSASSRELMIVGRIFVAFMVVISIAWVPIIVEMQGGQMYLYIQEVADYLTPPVAALFLLAIFWKRCNEQGAFYGGMAGFVLGAVRLILAFTYRAPECDQPDNRPGFIKDIHYMYVATALFWITGLITVIVSLLTPPPTKDQIRTTTFWSKKTLVTKESCSQKDEPYKMQEKSILQCSENSEVISHTIPNGKSEDSIKGLQPEDVNLLVTCREEGNPVASMGHSEAETPVDAYSNGQAALMGEREREKETENRSRYWKFIDWFCGFKSKSLSKRSLRDLMDEEAVCLQMLEETPQVKVILNIGLFAVCSLGIFMFVYFSL</sequence>
<reference key="1">
    <citation type="journal article" date="2000" name="Cytogenet. Cell Genet.">
        <title>Murine chromosome 16 telomeric region, homologous with human chromosome 21q22, contains the osmoregulatory Na(+)/myo-inositol cotransporter (SLC5A3) gene.</title>
        <authorList>
            <person name="McVeigh K.E."/>
            <person name="Mallee J.J."/>
            <person name="Lucente A."/>
            <person name="Barnoski B.L."/>
            <person name="Wu S."/>
            <person name="Berry G.T."/>
        </authorList>
    </citation>
    <scope>NUCLEOTIDE SEQUENCE [GENOMIC DNA]</scope>
</reference>
<reference key="2">
    <citation type="submission" date="2005-09" db="EMBL/GenBank/DDBJ databases">
        <authorList>
            <person name="Mural R.J."/>
            <person name="Adams M.D."/>
            <person name="Myers E.W."/>
            <person name="Smith H.O."/>
            <person name="Venter J.C."/>
        </authorList>
    </citation>
    <scope>NUCLEOTIDE SEQUENCE [LARGE SCALE GENOMIC DNA]</scope>
</reference>
<reference key="3">
    <citation type="journal article" date="2004" name="Genome Res.">
        <title>The status, quality, and expansion of the NIH full-length cDNA project: the Mammalian Gene Collection (MGC).</title>
        <authorList>
            <consortium name="The MGC Project Team"/>
        </authorList>
    </citation>
    <scope>NUCLEOTIDE SEQUENCE [LARGE SCALE MRNA]</scope>
    <source>
        <tissue>Brain</tissue>
    </source>
</reference>
<reference key="4">
    <citation type="journal article" date="2003" name="J. Biol. Chem.">
        <title>Loss of murine Na+/myo-inositol cotransporter leads to brain myo-inositol depletion and central apnea.</title>
        <authorList>
            <person name="Berry G.T."/>
            <person name="Wu S."/>
            <person name="Buccafusca R."/>
            <person name="Ren J."/>
            <person name="Gonzales L.W."/>
            <person name="Ballard P.L."/>
            <person name="Golden J.A."/>
            <person name="Stevens M.J."/>
            <person name="Greer J.J."/>
        </authorList>
    </citation>
    <scope>FUNCTION</scope>
    <scope>TISSUE SPECIFICITY</scope>
    <scope>DEVELOPMENTAL STAGE</scope>
    <scope>DISRUPTION PHENOTYPE</scope>
</reference>
<reference key="5">
    <citation type="journal article" date="2003" name="J. Virol.">
        <title>Sodium-dependent myo-inositol transporter 1 is a cellular receptor for Mus cervicolor M813 murine leukemia virus.</title>
        <authorList>
            <person name="Hein S."/>
            <person name="Prassolov V."/>
            <person name="Zhang Y."/>
            <person name="Ivanov D."/>
            <person name="Lohler J."/>
            <person name="Ross S.R."/>
            <person name="Stocking C."/>
        </authorList>
    </citation>
    <scope>FUNCTION AS M813 MURINE LEUKEMIA VIRUS RECEPTOR</scope>
    <scope>TOPOLOGY</scope>
</reference>
<reference key="6">
    <citation type="journal article" date="2009" name="Immunity">
        <title>The phagosomal proteome in interferon-gamma-activated macrophages.</title>
        <authorList>
            <person name="Trost M."/>
            <person name="English L."/>
            <person name="Lemieux S."/>
            <person name="Courcelles M."/>
            <person name="Desjardins M."/>
            <person name="Thibault P."/>
        </authorList>
    </citation>
    <scope>IDENTIFICATION BY MASS SPECTROMETRY [LARGE SCALE ANALYSIS]</scope>
</reference>
<reference key="7">
    <citation type="journal article" date="2010" name="Cell">
        <title>A tissue-specific atlas of mouse protein phosphorylation and expression.</title>
        <authorList>
            <person name="Huttlin E.L."/>
            <person name="Jedrychowski M.P."/>
            <person name="Elias J.E."/>
            <person name="Goswami T."/>
            <person name="Rad R."/>
            <person name="Beausoleil S.A."/>
            <person name="Villen J."/>
            <person name="Haas W."/>
            <person name="Sowa M.E."/>
            <person name="Gygi S.P."/>
        </authorList>
    </citation>
    <scope>IDENTIFICATION BY MASS SPECTROMETRY [LARGE SCALE ANALYSIS]</scope>
    <source>
        <tissue>Kidney</tissue>
    </source>
</reference>
<reference key="8">
    <citation type="journal article" date="2014" name="Sci. Signal.">
        <title>KCNQ1, KCNE2, and Na+-coupled solute transporters form reciprocally regulating complexes that affect neuronal excitability.</title>
        <authorList>
            <person name="Abbott G.W."/>
            <person name="Tai K.K."/>
            <person name="Neverisky D.L."/>
            <person name="Hansler A."/>
            <person name="Hu Z."/>
            <person name="Roepke T.K."/>
            <person name="Lerner D.J."/>
            <person name="Chen Q."/>
            <person name="Liu L."/>
            <person name="Zupan B."/>
            <person name="Toth M."/>
            <person name="Haynes R."/>
            <person name="Huang X."/>
            <person name="Demirbas D."/>
            <person name="Buccafusca R."/>
            <person name="Gross S.S."/>
            <person name="Kanda V.A."/>
            <person name="Berry G.T."/>
        </authorList>
    </citation>
    <scope>FUNCTION</scope>
    <scope>SUBCELLULAR LOCATION</scope>
    <scope>INTERACTION WITH KCNQ1</scope>
    <scope>TISSUE SPECIFICITY</scope>
</reference>
<name>SC5A3_MOUSE</name>
<gene>
    <name type="primary">Slc5a3</name>
</gene>
<comment type="function">
    <text evidence="2 3 5 7">Electrogenic Na(+)-coupled sugar symporter that actively transports myo-inositol and its stereoisomer scyllo-inositol across the plasma membrane, with a Na(+) to sugar coupling ratio of 2:1 (By similarity). Maintains myo-inositol concentration gradient that defines cell volume and fluid balance during osmotic stress, in particular in the fetoplacental unit and central nervous system (PubMed:12582158, PubMed:24595108). Forms coregulatory complexes with voltage-gated K(+) ion channels, allosterically altering ion selectivity, voltage dependence and gating kinetics of the channel. In turn, K(+) efflux through the channel forms a local electrical gradient that modulates electrogenic Na(+)-coupled myo-inositol influx through the transporter (By similarity) (PubMed:24595108). Associates with KCNQ1-KCNE2 channel in the apical membrane of choroid plexus epithelium and regulates the myo-inositol gradient between blood and cerebrospinal fluid with an impact on neuron excitability (PubMed:24595108). Associates with KCNQ2-KCNQ3 channel altering ion selectivity, increasing Na(+) and Cs(+) permeation relative to K(+) permeation (By similarity). Provides myo-inositol precursor for biosynthesis of phosphoinositides such as PI(4,5)P2, thus indirectly affecting the activity of phosphoinositide-dependent ion channels and Ca(2+) signaling upon osmotic stress (By similarity).</text>
</comment>
<comment type="function">
    <text evidence="6">(Microbial infection) Functions as a retroviral receptor for M813 murine leukemia virus (MuLV) entry.</text>
</comment>
<comment type="catalytic activity">
    <reaction evidence="2">
        <text>myo-inositol(out) + 2 Na(+)(out) = myo-inositol(in) + 2 Na(+)(in)</text>
        <dbReference type="Rhea" id="RHEA:72987"/>
        <dbReference type="ChEBI" id="CHEBI:17268"/>
        <dbReference type="ChEBI" id="CHEBI:29101"/>
    </reaction>
</comment>
<comment type="catalytic activity">
    <reaction evidence="2">
        <text>scyllo-inositol(out) + 2 Na(+)(out) = scyllo-inositol(in) + 2 Na(+)(in)</text>
        <dbReference type="Rhea" id="RHEA:72991"/>
        <dbReference type="ChEBI" id="CHEBI:10642"/>
        <dbReference type="ChEBI" id="CHEBI:29101"/>
    </reaction>
</comment>
<comment type="subunit">
    <text evidence="3 7">Interacts with KCNQ2 (via the pore module) (By similarity). Interacts with KCNQ1; this interaction is direct (PubMed:24595108). Forms coregulatory complexes with ion channels KCNQ2-KCNQ3 and KCNQ1-KCNE2 (By similarity) (PubMed:24595108).</text>
</comment>
<comment type="subcellular location">
    <subcellularLocation>
        <location evidence="7">Apical cell membrane</location>
        <topology evidence="4">Multi-pass membrane protein</topology>
    </subcellularLocation>
    <subcellularLocation>
        <location evidence="7">Basolateral cell membrane</location>
        <topology evidence="4">Multi-pass membrane protein</topology>
    </subcellularLocation>
    <text evidence="7">Colocalizes with KCNQ1 at the apical membrane of choroid plexus epithelium.</text>
</comment>
<comment type="tissue specificity">
    <text evidence="5 7">Highly expressed in kidney, placenta, and brain and at a lesser extent in thymus, lung, bladder, and testes (PubMed:12582158). Expressed in the choroid plexus epithelium (at protein level) (PubMed:24595108).</text>
</comment>
<comment type="developmental stage">
    <text evidence="5">Expressed in placenta at 14.5 dpc.</text>
</comment>
<comment type="disruption phenotype">
    <text evidence="5">Mutant embryos show brain myo-inositol deficiency and central apnea and die soon after birth due to hypoventilation.</text>
</comment>
<comment type="similarity">
    <text evidence="8">Belongs to the sodium:solute symporter (SSF) (TC 2.A.21) family.</text>
</comment>
<protein>
    <recommendedName>
        <fullName>Sodium/myo-inositol cotransporter</fullName>
        <shortName>Na(+)/myo-inositol cotransporter</shortName>
    </recommendedName>
    <alternativeName>
        <fullName>Sodium/myo-inositol transporter 1</fullName>
        <shortName>SMIT1</shortName>
    </alternativeName>
    <alternativeName>
        <fullName>Solute carrier family 5 member 3</fullName>
    </alternativeName>
</protein>